<keyword id="KW-0153">Cholesterol metabolism</keyword>
<keyword id="KW-0443">Lipid metabolism</keyword>
<keyword id="KW-0456">Lyase</keyword>
<keyword id="KW-1185">Reference proteome</keyword>
<keyword id="KW-0753">Steroid metabolism</keyword>
<keyword id="KW-1207">Sterol metabolism</keyword>
<gene>
    <name evidence="5" type="primary">ltp2</name>
    <name evidence="7" type="ordered locus">Rv3540c</name>
</gene>
<feature type="chain" id="PRO_0000452243" description="17-hydroxy-3-oxo-4-pregnene-20-carboxyl-CoA lyase">
    <location>
        <begin position="1"/>
        <end position="386"/>
    </location>
</feature>
<feature type="active site" description="Proton acceptor" evidence="1">
    <location>
        <position position="292"/>
    </location>
</feature>
<feature type="active site" description="Proton donor" evidence="1">
    <location>
        <position position="342"/>
    </location>
</feature>
<feature type="mutagenesis site" description="No change in activity." evidence="4">
    <original>C</original>
    <variation>A</variation>
    <location>
        <position position="85"/>
    </location>
</feature>
<feature type="mutagenesis site" description="Loss of activity." evidence="4">
    <original>H</original>
    <variation>A</variation>
    <location>
        <position position="344"/>
    </location>
</feature>
<reference key="1">
    <citation type="journal article" date="1998" name="Nature">
        <title>Deciphering the biology of Mycobacterium tuberculosis from the complete genome sequence.</title>
        <authorList>
            <person name="Cole S.T."/>
            <person name="Brosch R."/>
            <person name="Parkhill J."/>
            <person name="Garnier T."/>
            <person name="Churcher C.M."/>
            <person name="Harris D.E."/>
            <person name="Gordon S.V."/>
            <person name="Eiglmeier K."/>
            <person name="Gas S."/>
            <person name="Barry C.E. III"/>
            <person name="Tekaia F."/>
            <person name="Badcock K."/>
            <person name="Basham D."/>
            <person name="Brown D."/>
            <person name="Chillingworth T."/>
            <person name="Connor R."/>
            <person name="Davies R.M."/>
            <person name="Devlin K."/>
            <person name="Feltwell T."/>
            <person name="Gentles S."/>
            <person name="Hamlin N."/>
            <person name="Holroyd S."/>
            <person name="Hornsby T."/>
            <person name="Jagels K."/>
            <person name="Krogh A."/>
            <person name="McLean J."/>
            <person name="Moule S."/>
            <person name="Murphy L.D."/>
            <person name="Oliver S."/>
            <person name="Osborne J."/>
            <person name="Quail M.A."/>
            <person name="Rajandream M.A."/>
            <person name="Rogers J."/>
            <person name="Rutter S."/>
            <person name="Seeger K."/>
            <person name="Skelton S."/>
            <person name="Squares S."/>
            <person name="Squares R."/>
            <person name="Sulston J.E."/>
            <person name="Taylor K."/>
            <person name="Whitehead S."/>
            <person name="Barrell B.G."/>
        </authorList>
    </citation>
    <scope>NUCLEOTIDE SEQUENCE [LARGE SCALE GENOMIC DNA]</scope>
    <source>
        <strain>ATCC 25618 / H37Rv</strain>
    </source>
</reference>
<reference key="2">
    <citation type="journal article" date="2011" name="Mol. Cell. Proteomics">
        <title>Proteogenomic analysis of Mycobacterium tuberculosis by high resolution mass spectrometry.</title>
        <authorList>
            <person name="Kelkar D.S."/>
            <person name="Kumar D."/>
            <person name="Kumar P."/>
            <person name="Balakrishnan L."/>
            <person name="Muthusamy B."/>
            <person name="Yadav A.K."/>
            <person name="Shrivastava P."/>
            <person name="Marimuthu A."/>
            <person name="Anand S."/>
            <person name="Sundaram H."/>
            <person name="Kingsbury R."/>
            <person name="Harsha H.C."/>
            <person name="Nair B."/>
            <person name="Prasad T.S."/>
            <person name="Chauhan D.S."/>
            <person name="Katoch K."/>
            <person name="Katoch V.M."/>
            <person name="Kumar P."/>
            <person name="Chaerkady R."/>
            <person name="Ramachandran S."/>
            <person name="Dash D."/>
            <person name="Pandey A."/>
        </authorList>
    </citation>
    <scope>IDENTIFICATION BY MASS SPECTROMETRY [LARGE SCALE ANALYSIS]</scope>
    <source>
        <strain>ATCC 25618 / H37Rv</strain>
    </source>
</reference>
<reference key="3">
    <citation type="journal article" date="2011" name="J. Biol. Chem.">
        <title>Pathway profiling in Mycobacterium tuberculosis: elucidation of cholesterol-derived catabolite and enzymes that catalyze its metabolism.</title>
        <authorList>
            <person name="Thomas S.T."/>
            <person name="VanderVen B.C."/>
            <person name="Sherman D.R."/>
            <person name="Russell D.G."/>
            <person name="Sampson N.S."/>
        </authorList>
    </citation>
    <scope>FUNCTION</scope>
    <scope>PATHWAY</scope>
    <source>
        <strain>H37Rv</strain>
    </source>
</reference>
<reference key="4">
    <citation type="journal article" date="2018" name="J. Bacteriol.">
        <title>Characterization of an aldolase involved in cholesterol side chain degradation in Mycobacterium tuberculosis.</title>
        <authorList>
            <person name="Gilbert S."/>
            <person name="Hood L."/>
            <person name="Seah S.Y.K."/>
        </authorList>
    </citation>
    <scope>FUNCTION</scope>
    <scope>CATALYTIC ACTIVITY</scope>
    <scope>BIOPHYSICOCHEMICAL PROPERTIES</scope>
    <scope>PATHWAY</scope>
    <scope>SUBUNIT</scope>
    <scope>INTERACTION WITH CHSH2</scope>
</reference>
<reference key="5">
    <citation type="journal article" date="2019" name="Biochemistry">
        <title>Mycobacterium tuberculosis exploits a heterohexameric enoyl-CoA hydratase retro-aldolase complex for cholesterol catabolism.</title>
        <authorList>
            <person name="Yuan T."/>
            <person name="Yang M."/>
            <person name="Gehring K."/>
            <person name="Sampson N.S."/>
        </authorList>
    </citation>
    <scope>FUNCTION</scope>
    <scope>CATALYTIC ACTIVITY</scope>
    <scope>SUBUNIT</scope>
    <scope>SAXS AND EM STUDIES OF THE CHSH1-CHSH2-LTP2 COMPLEX</scope>
    <scope>MUTAGENESIS OF CYS-85 AND HIS-344</scope>
    <source>
        <strain>H37Rv</strain>
    </source>
</reference>
<comment type="function">
    <text evidence="2 3 4">Involved in cholesterol side chain degradation (PubMed:22045806, PubMed:29109182). When associated with the ChsH1/ChsH2 hydratase, catalyzes the retroaldol cleavage of 17-hydroxy-3-oxo-4-pregnene-20-carboxyl-CoA (17-HOPC-CoA) produced by the hydratase, forming androst-4-ene-3,17-dione and propionyl-CoA (PubMed:29109182, PubMed:31568719).</text>
</comment>
<comment type="catalytic activity">
    <reaction evidence="3 4">
        <text>17-hydroxy-3-oxochol-4-en-22-oyl-CoA = androst-4-ene-3,17-dione + propanoyl-CoA</text>
        <dbReference type="Rhea" id="RHEA:46648"/>
        <dbReference type="ChEBI" id="CHEBI:16422"/>
        <dbReference type="ChEBI" id="CHEBI:57392"/>
        <dbReference type="ChEBI" id="CHEBI:86028"/>
    </reaction>
    <physiologicalReaction direction="left-to-right" evidence="3 4">
        <dbReference type="Rhea" id="RHEA:46649"/>
    </physiologicalReaction>
</comment>
<comment type="biophysicochemical properties">
    <kinetics>
        <KM evidence="3">6.54 uM for 17-HOPC-CoA (in the presence of ChsH2-DUF35)</KM>
        <text evidence="3">kcat is 159 sec(-1).</text>
    </kinetics>
</comment>
<comment type="pathway">
    <text evidence="2 3">Steroid metabolism; cholesterol degradation.</text>
</comment>
<comment type="subunit">
    <text evidence="3 4">Homodimer (PubMed:29109182). Interacts with the ChsH1/ChsH2 hydratase via the DUF35 C-terminal region of ChsH2 (ChsH2-DUF35) (PubMed:29109182, PubMed:31568719). The ChsH1-ChsH2-Ltp2 protein complex is composed of two protomers that form a heterohexameric structure through the Ltp2 dimerization interface (PubMed:31568719).</text>
</comment>
<comment type="similarity">
    <text evidence="6">Belongs to the thiolase-like superfamily.</text>
</comment>
<organism>
    <name type="scientific">Mycobacterium tuberculosis (strain ATCC 25618 / H37Rv)</name>
    <dbReference type="NCBI Taxonomy" id="83332"/>
    <lineage>
        <taxon>Bacteria</taxon>
        <taxon>Bacillati</taxon>
        <taxon>Actinomycetota</taxon>
        <taxon>Actinomycetes</taxon>
        <taxon>Mycobacteriales</taxon>
        <taxon>Mycobacteriaceae</taxon>
        <taxon>Mycobacterium</taxon>
        <taxon>Mycobacterium tuberculosis complex</taxon>
    </lineage>
</organism>
<sequence>MLSGQAAIVGIGATDFSKNSGRSELRLAAEAVLDALADAGLSPTDVDGLTTFTMDTNTEIAVARAAGIGELTFFSKIHYGGGAACATVQHAAMAVATGVADVVVAYRAFNERSGMRFGQVQTRLTENADSTGVDNSFSYPHGLSTPAAQVAMIARRYMHLSGATSRDFGAVSVADRKHAANNPKAYFYGKPITIEDHQNSRWIAEPLRLLDCCQETDGAVAIVVTSAARARDLKQRPVVIEAAAQGCSPDQYTMVSYYRPELDGLPEMGLVGRQLWAQSGLTPADVQTAVLYDHFTPFTLIQLEELGFCGKGEAKDFIADGAIEVGGRLPINTHGGQLGEAYIHGMNGIAEGVRQLRGTSVNPVAGVEHVLVTAGTGVPTSGLILG</sequence>
<name>LTP2_MYCTU</name>
<proteinExistence type="evidence at protein level"/>
<evidence type="ECO:0000250" key="1">
    <source>
        <dbReference type="UniProtKB" id="D1AB74"/>
    </source>
</evidence>
<evidence type="ECO:0000269" key="2">
    <source>
    </source>
</evidence>
<evidence type="ECO:0000269" key="3">
    <source>
    </source>
</evidence>
<evidence type="ECO:0000269" key="4">
    <source>
    </source>
</evidence>
<evidence type="ECO:0000303" key="5">
    <source>
    </source>
</evidence>
<evidence type="ECO:0000305" key="6"/>
<evidence type="ECO:0000312" key="7">
    <source>
        <dbReference type="EMBL" id="CCP46362.1"/>
    </source>
</evidence>
<protein>
    <recommendedName>
        <fullName evidence="6">17-hydroxy-3-oxo-4-pregnene-20-carboxyl-CoA lyase</fullName>
        <ecNumber evidence="3 4">4.1.3.-</ecNumber>
    </recommendedName>
    <alternativeName>
        <fullName evidence="6">Retro-aldolase Ltp2</fullName>
    </alternativeName>
</protein>
<accession>I6Y3T7</accession>
<dbReference type="EC" id="4.1.3.-" evidence="3 4"/>
<dbReference type="EMBL" id="AL123456">
    <property type="protein sequence ID" value="CCP46362.1"/>
    <property type="molecule type" value="Genomic_DNA"/>
</dbReference>
<dbReference type="RefSeq" id="NP_218057.1">
    <property type="nucleotide sequence ID" value="NC_000962.3"/>
</dbReference>
<dbReference type="RefSeq" id="WP_003419287.1">
    <property type="nucleotide sequence ID" value="NZ_NVQJ01000014.1"/>
</dbReference>
<dbReference type="SMR" id="I6Y3T7"/>
<dbReference type="STRING" id="83332.Rv3540c"/>
<dbReference type="PaxDb" id="83332-Rv3540c"/>
<dbReference type="DNASU" id="888450"/>
<dbReference type="GeneID" id="888450"/>
<dbReference type="KEGG" id="mtu:Rv3540c"/>
<dbReference type="KEGG" id="mtv:RVBD_3540c"/>
<dbReference type="PATRIC" id="fig|83332.111.peg.3945"/>
<dbReference type="TubercuList" id="Rv3540c"/>
<dbReference type="eggNOG" id="COG0183">
    <property type="taxonomic scope" value="Bacteria"/>
</dbReference>
<dbReference type="InParanoid" id="I6Y3T7"/>
<dbReference type="OrthoDB" id="9785768at2"/>
<dbReference type="PhylomeDB" id="I6Y3T7"/>
<dbReference type="BioCyc" id="MetaCyc:G185E-7817-MONOMER"/>
<dbReference type="UniPathway" id="UPA01058"/>
<dbReference type="Proteomes" id="UP000001584">
    <property type="component" value="Chromosome"/>
</dbReference>
<dbReference type="GO" id="GO:0016746">
    <property type="term" value="F:acyltransferase activity"/>
    <property type="evidence" value="ECO:0000318"/>
    <property type="project" value="GO_Central"/>
</dbReference>
<dbReference type="GO" id="GO:0016747">
    <property type="term" value="F:acyltransferase activity, transferring groups other than amino-acyl groups"/>
    <property type="evidence" value="ECO:0007669"/>
    <property type="project" value="InterPro"/>
</dbReference>
<dbReference type="GO" id="GO:0016829">
    <property type="term" value="F:lyase activity"/>
    <property type="evidence" value="ECO:0007669"/>
    <property type="project" value="UniProtKB-KW"/>
</dbReference>
<dbReference type="GO" id="GO:0006707">
    <property type="term" value="P:cholesterol catabolic process"/>
    <property type="evidence" value="ECO:0007669"/>
    <property type="project" value="UniProtKB-UniPathway"/>
</dbReference>
<dbReference type="CDD" id="cd00829">
    <property type="entry name" value="SCP-x_thiolase"/>
    <property type="match status" value="1"/>
</dbReference>
<dbReference type="FunFam" id="3.40.47.10:FF:000090">
    <property type="entry name" value="Lipid transfer protein or keto acyl-CoA thiolase Ltp2"/>
    <property type="match status" value="1"/>
</dbReference>
<dbReference type="Gene3D" id="3.40.47.10">
    <property type="match status" value="1"/>
</dbReference>
<dbReference type="InterPro" id="IPR002155">
    <property type="entry name" value="Thiolase"/>
</dbReference>
<dbReference type="InterPro" id="IPR016039">
    <property type="entry name" value="Thiolase-like"/>
</dbReference>
<dbReference type="InterPro" id="IPR055140">
    <property type="entry name" value="Thiolase_C_2"/>
</dbReference>
<dbReference type="InterPro" id="IPR020616">
    <property type="entry name" value="Thiolase_N"/>
</dbReference>
<dbReference type="NCBIfam" id="NF005892">
    <property type="entry name" value="PRK07855.1"/>
    <property type="match status" value="1"/>
</dbReference>
<dbReference type="PANTHER" id="PTHR42870">
    <property type="entry name" value="ACETYL-COA C-ACETYLTRANSFERASE"/>
    <property type="match status" value="1"/>
</dbReference>
<dbReference type="PANTHER" id="PTHR42870:SF1">
    <property type="entry name" value="NON-SPECIFIC LIPID-TRANSFER PROTEIN-LIKE 2"/>
    <property type="match status" value="1"/>
</dbReference>
<dbReference type="Pfam" id="PF22691">
    <property type="entry name" value="Thiolase_C_1"/>
    <property type="match status" value="1"/>
</dbReference>
<dbReference type="Pfam" id="PF00108">
    <property type="entry name" value="Thiolase_N"/>
    <property type="match status" value="1"/>
</dbReference>
<dbReference type="PIRSF" id="PIRSF000429">
    <property type="entry name" value="Ac-CoA_Ac_transf"/>
    <property type="match status" value="1"/>
</dbReference>
<dbReference type="SUPFAM" id="SSF53901">
    <property type="entry name" value="Thiolase-like"/>
    <property type="match status" value="2"/>
</dbReference>